<gene>
    <name evidence="1" type="primary">atpH</name>
</gene>
<dbReference type="EMBL" id="AP006714">
    <property type="protein sequence ID" value="BAD27288.1"/>
    <property type="molecule type" value="Genomic_DNA"/>
</dbReference>
<dbReference type="RefSeq" id="YP_009389566.1">
    <property type="nucleotide sequence ID" value="NC_035224.1"/>
</dbReference>
<dbReference type="SMR" id="Q6ENW8"/>
<dbReference type="GeneID" id="33347767"/>
<dbReference type="GO" id="GO:0009535">
    <property type="term" value="C:chloroplast thylakoid membrane"/>
    <property type="evidence" value="ECO:0007669"/>
    <property type="project" value="UniProtKB-SubCell"/>
</dbReference>
<dbReference type="GO" id="GO:0045259">
    <property type="term" value="C:proton-transporting ATP synthase complex"/>
    <property type="evidence" value="ECO:0007669"/>
    <property type="project" value="UniProtKB-KW"/>
</dbReference>
<dbReference type="GO" id="GO:0033177">
    <property type="term" value="C:proton-transporting two-sector ATPase complex, proton-transporting domain"/>
    <property type="evidence" value="ECO:0007669"/>
    <property type="project" value="InterPro"/>
</dbReference>
<dbReference type="GO" id="GO:0008289">
    <property type="term" value="F:lipid binding"/>
    <property type="evidence" value="ECO:0007669"/>
    <property type="project" value="UniProtKB-KW"/>
</dbReference>
<dbReference type="GO" id="GO:0046933">
    <property type="term" value="F:proton-transporting ATP synthase activity, rotational mechanism"/>
    <property type="evidence" value="ECO:0007669"/>
    <property type="project" value="UniProtKB-UniRule"/>
</dbReference>
<dbReference type="CDD" id="cd18183">
    <property type="entry name" value="ATP-synt_Fo_c_ATPH"/>
    <property type="match status" value="1"/>
</dbReference>
<dbReference type="FunFam" id="1.20.20.10:FF:000001">
    <property type="entry name" value="ATP synthase subunit c, chloroplastic"/>
    <property type="match status" value="1"/>
</dbReference>
<dbReference type="Gene3D" id="1.20.20.10">
    <property type="entry name" value="F1F0 ATP synthase subunit C"/>
    <property type="match status" value="1"/>
</dbReference>
<dbReference type="HAMAP" id="MF_01396">
    <property type="entry name" value="ATP_synth_c_bact"/>
    <property type="match status" value="1"/>
</dbReference>
<dbReference type="InterPro" id="IPR005953">
    <property type="entry name" value="ATP_synth_csu_bac/chlpt"/>
</dbReference>
<dbReference type="InterPro" id="IPR000454">
    <property type="entry name" value="ATP_synth_F0_csu"/>
</dbReference>
<dbReference type="InterPro" id="IPR020537">
    <property type="entry name" value="ATP_synth_F0_csu_DDCD_BS"/>
</dbReference>
<dbReference type="InterPro" id="IPR038662">
    <property type="entry name" value="ATP_synth_F0_csu_sf"/>
</dbReference>
<dbReference type="InterPro" id="IPR002379">
    <property type="entry name" value="ATPase_proteolipid_c-like_dom"/>
</dbReference>
<dbReference type="InterPro" id="IPR035921">
    <property type="entry name" value="F/V-ATP_Csub_sf"/>
</dbReference>
<dbReference type="NCBIfam" id="TIGR01260">
    <property type="entry name" value="ATP_synt_c"/>
    <property type="match status" value="1"/>
</dbReference>
<dbReference type="NCBIfam" id="NF005608">
    <property type="entry name" value="PRK07354.1"/>
    <property type="match status" value="1"/>
</dbReference>
<dbReference type="PANTHER" id="PTHR10031">
    <property type="entry name" value="ATP SYNTHASE LIPID-BINDING PROTEIN, MITOCHONDRIAL"/>
    <property type="match status" value="1"/>
</dbReference>
<dbReference type="PANTHER" id="PTHR10031:SF0">
    <property type="entry name" value="ATPASE PROTEIN 9"/>
    <property type="match status" value="1"/>
</dbReference>
<dbReference type="Pfam" id="PF00137">
    <property type="entry name" value="ATP-synt_C"/>
    <property type="match status" value="1"/>
</dbReference>
<dbReference type="PRINTS" id="PR00124">
    <property type="entry name" value="ATPASEC"/>
</dbReference>
<dbReference type="SUPFAM" id="SSF81333">
    <property type="entry name" value="F1F0 ATP synthase subunit C"/>
    <property type="match status" value="1"/>
</dbReference>
<dbReference type="PROSITE" id="PS00605">
    <property type="entry name" value="ATPASE_C"/>
    <property type="match status" value="1"/>
</dbReference>
<name>ATPH_SACOF</name>
<comment type="function">
    <text evidence="1">F(1)F(0) ATP synthase produces ATP from ADP in the presence of a proton or sodium gradient. F-type ATPases consist of two structural domains, F(1) containing the extramembraneous catalytic core and F(0) containing the membrane proton channel, linked together by a central stalk and a peripheral stalk. During catalysis, ATP synthesis in the catalytic domain of F(1) is coupled via a rotary mechanism of the central stalk subunits to proton translocation.</text>
</comment>
<comment type="function">
    <text evidence="1">Key component of the F(0) channel; it plays a direct role in translocation across the membrane. A homomeric c-ring of between 10-14 subunits forms the central stalk rotor element with the F(1) delta and epsilon subunits.</text>
</comment>
<comment type="subunit">
    <text evidence="1">F-type ATPases have 2 components, F(1) - the catalytic core - and F(0) - the membrane proton channel. F(1) has five subunits: alpha(3), beta(3), gamma(1), delta(1), epsilon(1). F(0) has four main subunits: a(1), b(1), b'(1) and c(10-14). The alpha and beta chains form an alternating ring which encloses part of the gamma chain. F(1) is attached to F(0) by a central stalk formed by the gamma and epsilon chains, while a peripheral stalk is formed by the delta, b and b' chains.</text>
</comment>
<comment type="subcellular location">
    <subcellularLocation>
        <location evidence="1">Plastid</location>
        <location evidence="1">Chloroplast thylakoid membrane</location>
        <topology evidence="1">Multi-pass membrane protein</topology>
    </subcellularLocation>
</comment>
<comment type="miscellaneous">
    <text>In plastids the F-type ATPase is also known as CF(1)CF(0).</text>
</comment>
<comment type="miscellaneous">
    <text>Dicyclohexylcarbodiimide (DCDD) inhibits ATPase.</text>
</comment>
<comment type="similarity">
    <text evidence="1">Belongs to the ATPase C chain family.</text>
</comment>
<sequence length="81" mass="7974">MNPLIAAASVIAAGLAVGLASIGPGVGQGTAAGQAVEGIARQPEAEGKIRGTLLLSLAFMEALTIYGLVVALALLFANPFV</sequence>
<geneLocation type="chloroplast"/>
<organism>
    <name type="scientific">Saccharum officinarum</name>
    <name type="common">Sugarcane</name>
    <dbReference type="NCBI Taxonomy" id="4547"/>
    <lineage>
        <taxon>Eukaryota</taxon>
        <taxon>Viridiplantae</taxon>
        <taxon>Streptophyta</taxon>
        <taxon>Embryophyta</taxon>
        <taxon>Tracheophyta</taxon>
        <taxon>Spermatophyta</taxon>
        <taxon>Magnoliopsida</taxon>
        <taxon>Liliopsida</taxon>
        <taxon>Poales</taxon>
        <taxon>Poaceae</taxon>
        <taxon>PACMAD clade</taxon>
        <taxon>Panicoideae</taxon>
        <taxon>Andropogonodae</taxon>
        <taxon>Andropogoneae</taxon>
        <taxon>Saccharinae</taxon>
        <taxon>Saccharum</taxon>
        <taxon>Saccharum officinarum species complex</taxon>
    </lineage>
</organism>
<accession>Q6ENW8</accession>
<keyword id="KW-0066">ATP synthesis</keyword>
<keyword id="KW-0138">CF(0)</keyword>
<keyword id="KW-0150">Chloroplast</keyword>
<keyword id="KW-0375">Hydrogen ion transport</keyword>
<keyword id="KW-0406">Ion transport</keyword>
<keyword id="KW-0446">Lipid-binding</keyword>
<keyword id="KW-0472">Membrane</keyword>
<keyword id="KW-0934">Plastid</keyword>
<keyword id="KW-0793">Thylakoid</keyword>
<keyword id="KW-0812">Transmembrane</keyword>
<keyword id="KW-1133">Transmembrane helix</keyword>
<keyword id="KW-0813">Transport</keyword>
<feature type="chain" id="PRO_0000226901" description="ATP synthase subunit c, chloroplastic">
    <location>
        <begin position="1"/>
        <end position="81"/>
    </location>
</feature>
<feature type="transmembrane region" description="Helical" evidence="1">
    <location>
        <begin position="3"/>
        <end position="23"/>
    </location>
</feature>
<feature type="transmembrane region" description="Helical" evidence="1">
    <location>
        <begin position="57"/>
        <end position="77"/>
    </location>
</feature>
<feature type="site" description="Reversibly protonated during proton transport" evidence="1">
    <location>
        <position position="61"/>
    </location>
</feature>
<protein>
    <recommendedName>
        <fullName evidence="1">ATP synthase subunit c, chloroplastic</fullName>
    </recommendedName>
    <alternativeName>
        <fullName evidence="1">ATP synthase F(0) sector subunit c</fullName>
    </alternativeName>
    <alternativeName>
        <fullName evidence="1">ATPase subunit III</fullName>
    </alternativeName>
    <alternativeName>
        <fullName evidence="1">F-type ATPase subunit c</fullName>
        <shortName evidence="1">F-ATPase subunit c</shortName>
    </alternativeName>
    <alternativeName>
        <fullName evidence="1">Lipid-binding protein</fullName>
    </alternativeName>
</protein>
<reference key="1">
    <citation type="journal article" date="2004" name="DNA Res.">
        <title>Complete nucleotide sequence of the sugarcane (Saccharum officinarum) chloroplast genome: a comparative analysis of four monocot chloroplast genomes.</title>
        <authorList>
            <person name="Asano T."/>
            <person name="Tsudzuki T."/>
            <person name="Takahashi S."/>
            <person name="Shimada H."/>
            <person name="Kadowaki K."/>
        </authorList>
    </citation>
    <scope>NUCLEOTIDE SEQUENCE [LARGE SCALE GENOMIC DNA]</scope>
</reference>
<proteinExistence type="inferred from homology"/>
<evidence type="ECO:0000255" key="1">
    <source>
        <dbReference type="HAMAP-Rule" id="MF_01396"/>
    </source>
</evidence>